<keyword id="KW-0045">Antibiotic biosynthesis</keyword>
<keyword id="KW-0378">Hydrolase</keyword>
<keyword id="KW-0460">Magnesium</keyword>
<keyword id="KW-0479">Metal-binding</keyword>
<keyword id="KW-1185">Reference proteome</keyword>
<accession>Q0ZQ40</accession>
<reference key="1">
    <citation type="journal article" date="2008" name="Chem. Biol.">
        <title>Cloning, expression, and biochemical characterization of Streptomyces rubellomurinus genes required for biosynthesis of antimalarial compound FR900098.</title>
        <authorList>
            <person name="Eliot A.C."/>
            <person name="Griffin B.M."/>
            <person name="Thomas P.M."/>
            <person name="Johannes T.W."/>
            <person name="Kelleher N.L."/>
            <person name="Zhao H."/>
            <person name="Metcalf W.W."/>
        </authorList>
    </citation>
    <scope>NUCLEOTIDE SEQUENCE [GENOMIC DNA]</scope>
    <source>
        <strain>ATCC 31215</strain>
    </source>
</reference>
<reference key="2">
    <citation type="submission" date="2015-02" db="EMBL/GenBank/DDBJ databases">
        <authorList>
            <person name="Ju K.-S."/>
            <person name="Doroghazi J.R."/>
            <person name="Metcalf W."/>
        </authorList>
    </citation>
    <scope>NUCLEOTIDE SEQUENCE [LARGE SCALE GENOMIC DNA]</scope>
    <source>
        <strain>ATCC 31215</strain>
    </source>
</reference>
<reference key="3">
    <citation type="journal article" date="2010" name="Chem. Biol.">
        <title>Deciphering the late biosynthetic steps of antimalarial compound FR-900098.</title>
        <authorList>
            <person name="Johannes T.W."/>
            <person name="DeSieno M.A."/>
            <person name="Griffin B.M."/>
            <person name="Thomas P.M."/>
            <person name="Kelleher N.L."/>
            <person name="Metcalf W.W."/>
            <person name="Zhao H."/>
        </authorList>
    </citation>
    <scope>FUNCTION</scope>
    <scope>CATALYTIC ACTIVITY</scope>
    <scope>PATHWAY</scope>
    <source>
        <strain>ATCC 31215</strain>
    </source>
</reference>
<proteinExistence type="evidence at protein level"/>
<dbReference type="EC" id="3.6.1.-" evidence="4"/>
<dbReference type="EMBL" id="DQ267750">
    <property type="protein sequence ID" value="ABB90398.1"/>
    <property type="molecule type" value="Genomic_DNA"/>
</dbReference>
<dbReference type="EMBL" id="JZKH01000051">
    <property type="status" value="NOT_ANNOTATED_CDS"/>
    <property type="molecule type" value="Genomic_DNA"/>
</dbReference>
<dbReference type="SMR" id="Q0ZQ40"/>
<dbReference type="BioCyc" id="MetaCyc:MONOMER-18403"/>
<dbReference type="Proteomes" id="UP000033699">
    <property type="component" value="Unassembled WGS sequence"/>
</dbReference>
<dbReference type="GO" id="GO:0005829">
    <property type="term" value="C:cytosol"/>
    <property type="evidence" value="ECO:0007669"/>
    <property type="project" value="TreeGrafter"/>
</dbReference>
<dbReference type="GO" id="GO:0016787">
    <property type="term" value="F:hydrolase activity"/>
    <property type="evidence" value="ECO:0007669"/>
    <property type="project" value="UniProtKB-KW"/>
</dbReference>
<dbReference type="GO" id="GO:0046872">
    <property type="term" value="F:metal ion binding"/>
    <property type="evidence" value="ECO:0007669"/>
    <property type="project" value="UniProtKB-KW"/>
</dbReference>
<dbReference type="GO" id="GO:0017000">
    <property type="term" value="P:antibiotic biosynthetic process"/>
    <property type="evidence" value="ECO:0007669"/>
    <property type="project" value="UniProtKB-KW"/>
</dbReference>
<dbReference type="GO" id="GO:0006753">
    <property type="term" value="P:nucleoside phosphate metabolic process"/>
    <property type="evidence" value="ECO:0007669"/>
    <property type="project" value="TreeGrafter"/>
</dbReference>
<dbReference type="GO" id="GO:0019693">
    <property type="term" value="P:ribose phosphate metabolic process"/>
    <property type="evidence" value="ECO:0007669"/>
    <property type="project" value="TreeGrafter"/>
</dbReference>
<dbReference type="Gene3D" id="3.90.79.10">
    <property type="entry name" value="Nucleoside Triphosphate Pyrophosphohydrolase"/>
    <property type="match status" value="1"/>
</dbReference>
<dbReference type="InterPro" id="IPR015797">
    <property type="entry name" value="NUDIX_hydrolase-like_dom_sf"/>
</dbReference>
<dbReference type="InterPro" id="IPR020084">
    <property type="entry name" value="NUDIX_hydrolase_CS"/>
</dbReference>
<dbReference type="InterPro" id="IPR000086">
    <property type="entry name" value="NUDIX_hydrolase_dom"/>
</dbReference>
<dbReference type="PANTHER" id="PTHR11839:SF18">
    <property type="entry name" value="NUDIX HYDROLASE DOMAIN-CONTAINING PROTEIN"/>
    <property type="match status" value="1"/>
</dbReference>
<dbReference type="PANTHER" id="PTHR11839">
    <property type="entry name" value="UDP/ADP-SUGAR PYROPHOSPHATASE"/>
    <property type="match status" value="1"/>
</dbReference>
<dbReference type="Pfam" id="PF00293">
    <property type="entry name" value="NUDIX"/>
    <property type="match status" value="1"/>
</dbReference>
<dbReference type="SUPFAM" id="SSF55811">
    <property type="entry name" value="Nudix"/>
    <property type="match status" value="1"/>
</dbReference>
<dbReference type="PROSITE" id="PS51462">
    <property type="entry name" value="NUDIX"/>
    <property type="match status" value="1"/>
</dbReference>
<dbReference type="PROSITE" id="PS00893">
    <property type="entry name" value="NUDIX_BOX"/>
    <property type="match status" value="1"/>
</dbReference>
<gene>
    <name evidence="5" type="primary">frbI</name>
    <name evidence="7" type="ORF">VM95_23235</name>
</gene>
<evidence type="ECO:0000250" key="1">
    <source>
        <dbReference type="UniProtKB" id="Q8KP10"/>
    </source>
</evidence>
<evidence type="ECO:0000255" key="2">
    <source>
        <dbReference type="PROSITE-ProRule" id="PRU00794"/>
    </source>
</evidence>
<evidence type="ECO:0000256" key="3">
    <source>
        <dbReference type="SAM" id="MobiDB-lite"/>
    </source>
</evidence>
<evidence type="ECO:0000269" key="4">
    <source>
    </source>
</evidence>
<evidence type="ECO:0000303" key="5">
    <source>
    </source>
</evidence>
<evidence type="ECO:0000305" key="6"/>
<evidence type="ECO:0000312" key="7">
    <source>
        <dbReference type="EMBL" id="JZKH01000051"/>
    </source>
</evidence>
<feature type="chain" id="PRO_0000460444" description="CMP-5'-(N-acetyl-N-hydroxy-3-aminopropyl)phosphonate hydrolase">
    <location>
        <begin position="1"/>
        <end position="206"/>
    </location>
</feature>
<feature type="domain" description="Nudix hydrolase" evidence="2">
    <location>
        <begin position="37"/>
        <end position="166"/>
    </location>
</feature>
<feature type="region of interest" description="Disordered" evidence="3">
    <location>
        <begin position="177"/>
        <end position="206"/>
    </location>
</feature>
<feature type="short sequence motif" description="Nudix box" evidence="2">
    <location>
        <begin position="74"/>
        <end position="95"/>
    </location>
</feature>
<feature type="compositionally biased region" description="Low complexity" evidence="3">
    <location>
        <begin position="177"/>
        <end position="194"/>
    </location>
</feature>
<protein>
    <recommendedName>
        <fullName evidence="6">CMP-5'-(N-acetyl-N-hydroxy-3-aminopropyl)phosphonate hydrolase</fullName>
        <ecNumber evidence="4">3.6.1.-</ecNumber>
    </recommendedName>
</protein>
<organism>
    <name type="scientific">Streptomyces rubellomurinus (strain ATCC 31215)</name>
    <dbReference type="NCBI Taxonomy" id="359131"/>
    <lineage>
        <taxon>Bacteria</taxon>
        <taxon>Bacillati</taxon>
        <taxon>Actinomycetota</taxon>
        <taxon>Actinomycetes</taxon>
        <taxon>Kitasatosporales</taxon>
        <taxon>Streptomycetaceae</taxon>
        <taxon>Streptomyces</taxon>
    </lineage>
</organism>
<name>FRBI_STRR3</name>
<comment type="function">
    <text evidence="4">Nucleotide hydrolase involved in the biosynthesis of the phosphonate antibiotic FR-900098, a potent antimalarial agent that acts as an inhibitor of 1-deoxy-D-xylulose 5-phosphate reductoisomerase (DXR), the first enzyme in the nonmevalonate pathway for isoprenoid biosynthesis (PubMed:20142041). Catalyzes the hydrolysis of CMP-5'-(N-acetyl-N-hydroxy-3-aminopropyl)phosphonate (CMP-5'-FR-900098) to produce CMP and the final compound FR-900098 (PubMed:20142041). In vitro, has broad substrate specificity and also catalyzes the hydrolysis of all the other CMP-containing intermediates within the pathway and shows low activity toward CTP (PubMed:20142041).</text>
</comment>
<comment type="catalytic activity">
    <reaction evidence="4">
        <text>CMP-5'-(N-acetyl-N-hydroxy-3-aminopropyl)phosphonate + H2O = 3-(N-acetyl-N-hydroxy)aminopropylphosphonate + CMP + H(+)</text>
        <dbReference type="Rhea" id="RHEA:78499"/>
        <dbReference type="ChEBI" id="CHEBI:15377"/>
        <dbReference type="ChEBI" id="CHEBI:15378"/>
        <dbReference type="ChEBI" id="CHEBI:60377"/>
        <dbReference type="ChEBI" id="CHEBI:229208"/>
        <dbReference type="ChEBI" id="CHEBI:229209"/>
    </reaction>
    <physiologicalReaction direction="left-to-right" evidence="4">
        <dbReference type="Rhea" id="RHEA:78500"/>
    </physiologicalReaction>
</comment>
<comment type="cofactor">
    <cofactor evidence="1">
        <name>Mg(2+)</name>
        <dbReference type="ChEBI" id="CHEBI:18420"/>
    </cofactor>
</comment>
<comment type="pathway">
    <text evidence="4">Antibiotic biosynthesis.</text>
</comment>
<comment type="similarity">
    <text evidence="6">Belongs to the Nudix hydrolase family.</text>
</comment>
<sequence length="206" mass="22554">MRWLGRGERVVHDSRFLTVSVADVELPGGETVEHHFVRAPGAAIIVVQDERQRILMMYRHRFVSDLWGWELPGGLVDDREDPAVTAAREAEEETGYRPRNVRHLLTYQPMAGMVDSPHHIYLADGADLVGGPTECTEAQETRWMPLDEAAELLRSGRTVTSGTAIGLLAVLGLGGARQQPGGVQEQPGGAQQQGMNESHSGRTVRG</sequence>